<keyword id="KW-0963">Cytoplasm</keyword>
<keyword id="KW-0496">Mitochondrion</keyword>
<keyword id="KW-0520">NAD</keyword>
<keyword id="KW-0539">Nucleus</keyword>
<keyword id="KW-0560">Oxidoreductase</keyword>
<keyword id="KW-0597">Phosphoprotein</keyword>
<keyword id="KW-1185">Reference proteome</keyword>
<organism>
    <name type="scientific">Saccharomyces cerevisiae (strain ATCC 204508 / S288c)</name>
    <name type="common">Baker's yeast</name>
    <dbReference type="NCBI Taxonomy" id="559292"/>
    <lineage>
        <taxon>Eukaryota</taxon>
        <taxon>Fungi</taxon>
        <taxon>Dikarya</taxon>
        <taxon>Ascomycota</taxon>
        <taxon>Saccharomycotina</taxon>
        <taxon>Saccharomycetes</taxon>
        <taxon>Saccharomycetales</taxon>
        <taxon>Saccharomycetaceae</taxon>
        <taxon>Saccharomyces</taxon>
    </lineage>
</organism>
<accession>P53839</accession>
<accession>D6W0S0</accession>
<reference key="1">
    <citation type="journal article" date="1997" name="Nature">
        <title>The nucleotide sequence of Saccharomyces cerevisiae chromosome XIV and its evolutionary implications.</title>
        <authorList>
            <person name="Philippsen P."/>
            <person name="Kleine K."/>
            <person name="Poehlmann R."/>
            <person name="Duesterhoeft A."/>
            <person name="Hamberg K."/>
            <person name="Hegemann J.H."/>
            <person name="Obermaier B."/>
            <person name="Urrestarazu L.A."/>
            <person name="Aert R."/>
            <person name="Albermann K."/>
            <person name="Altmann R."/>
            <person name="Andre B."/>
            <person name="Baladron V."/>
            <person name="Ballesta J.P.G."/>
            <person name="Becam A.-M."/>
            <person name="Beinhauer J.D."/>
            <person name="Boskovic J."/>
            <person name="Buitrago M.J."/>
            <person name="Bussereau F."/>
            <person name="Coster F."/>
            <person name="Crouzet M."/>
            <person name="D'Angelo M."/>
            <person name="Dal Pero F."/>
            <person name="De Antoni A."/>
            <person name="del Rey F."/>
            <person name="Doignon F."/>
            <person name="Domdey H."/>
            <person name="Dubois E."/>
            <person name="Fiedler T.A."/>
            <person name="Fleig U."/>
            <person name="Floeth M."/>
            <person name="Fritz C."/>
            <person name="Gaillardin C."/>
            <person name="Garcia-Cantalejo J.M."/>
            <person name="Glansdorff N."/>
            <person name="Goffeau A."/>
            <person name="Gueldener U."/>
            <person name="Herbert C.J."/>
            <person name="Heumann K."/>
            <person name="Heuss-Neitzel D."/>
            <person name="Hilbert H."/>
            <person name="Hinni K."/>
            <person name="Iraqui Houssaini I."/>
            <person name="Jacquet M."/>
            <person name="Jimenez A."/>
            <person name="Jonniaux J.-L."/>
            <person name="Karpfinger-Hartl L."/>
            <person name="Lanfranchi G."/>
            <person name="Lepingle A."/>
            <person name="Levesque H."/>
            <person name="Lyck R."/>
            <person name="Maftahi M."/>
            <person name="Mallet L."/>
            <person name="Maurer C.T.C."/>
            <person name="Messenguy F."/>
            <person name="Mewes H.-W."/>
            <person name="Moestl D."/>
            <person name="Nasr F."/>
            <person name="Nicaud J.-M."/>
            <person name="Niedenthal R.K."/>
            <person name="Pandolfo D."/>
            <person name="Pierard A."/>
            <person name="Piravandi E."/>
            <person name="Planta R.J."/>
            <person name="Pohl T.M."/>
            <person name="Purnelle B."/>
            <person name="Rebischung C."/>
            <person name="Remacha M.A."/>
            <person name="Revuelta J.L."/>
            <person name="Rinke M."/>
            <person name="Saiz J.E."/>
            <person name="Sartorello F."/>
            <person name="Scherens B."/>
            <person name="Sen-Gupta M."/>
            <person name="Soler-Mira A."/>
            <person name="Urbanus J.H.M."/>
            <person name="Valle G."/>
            <person name="Van Dyck L."/>
            <person name="Verhasselt P."/>
            <person name="Vierendeels F."/>
            <person name="Vissers S."/>
            <person name="Voet M."/>
            <person name="Volckaert G."/>
            <person name="Wach A."/>
            <person name="Wambutt R."/>
            <person name="Wedler H."/>
            <person name="Zollner A."/>
            <person name="Hani J."/>
        </authorList>
    </citation>
    <scope>NUCLEOTIDE SEQUENCE [LARGE SCALE GENOMIC DNA]</scope>
    <source>
        <strain>ATCC 204508 / S288c</strain>
    </source>
</reference>
<reference key="2">
    <citation type="journal article" date="2014" name="G3 (Bethesda)">
        <title>The reference genome sequence of Saccharomyces cerevisiae: Then and now.</title>
        <authorList>
            <person name="Engel S.R."/>
            <person name="Dietrich F.S."/>
            <person name="Fisk D.G."/>
            <person name="Binkley G."/>
            <person name="Balakrishnan R."/>
            <person name="Costanzo M.C."/>
            <person name="Dwight S.S."/>
            <person name="Hitz B.C."/>
            <person name="Karra K."/>
            <person name="Nash R.S."/>
            <person name="Weng S."/>
            <person name="Wong E.D."/>
            <person name="Lloyd P."/>
            <person name="Skrzypek M.S."/>
            <person name="Miyasato S.R."/>
            <person name="Simison M."/>
            <person name="Cherry J.M."/>
        </authorList>
    </citation>
    <scope>GENOME REANNOTATION</scope>
    <source>
        <strain>ATCC 204508 / S288c</strain>
    </source>
</reference>
<reference key="3">
    <citation type="journal article" date="2007" name="Genome Res.">
        <title>Approaching a complete repository of sequence-verified protein-encoding clones for Saccharomyces cerevisiae.</title>
        <authorList>
            <person name="Hu Y."/>
            <person name="Rolfs A."/>
            <person name="Bhullar B."/>
            <person name="Murthy T.V.S."/>
            <person name="Zhu C."/>
            <person name="Berger M.F."/>
            <person name="Camargo A.A."/>
            <person name="Kelley F."/>
            <person name="McCarron S."/>
            <person name="Jepson D."/>
            <person name="Richardson A."/>
            <person name="Raphael J."/>
            <person name="Moreira D."/>
            <person name="Taycher E."/>
            <person name="Zuo D."/>
            <person name="Mohr S."/>
            <person name="Kane M.F."/>
            <person name="Williamson J."/>
            <person name="Simpson A.J.G."/>
            <person name="Bulyk M.L."/>
            <person name="Harlow E."/>
            <person name="Marsischky G."/>
            <person name="Kolodner R.D."/>
            <person name="LaBaer J."/>
        </authorList>
    </citation>
    <scope>NUCLEOTIDE SEQUENCE [GENOMIC DNA]</scope>
    <source>
        <strain>ATCC 204508 / S288c</strain>
    </source>
</reference>
<reference key="4">
    <citation type="journal article" date="2003" name="Nature">
        <title>Global analysis of protein localization in budding yeast.</title>
        <authorList>
            <person name="Huh W.-K."/>
            <person name="Falvo J.V."/>
            <person name="Gerke L.C."/>
            <person name="Carroll A.S."/>
            <person name="Howson R.W."/>
            <person name="Weissman J.S."/>
            <person name="O'Shea E.K."/>
        </authorList>
    </citation>
    <scope>SUBCELLULAR LOCATION [LARGE SCALE ANALYSIS]</scope>
</reference>
<reference key="5">
    <citation type="journal article" date="2003" name="Nature">
        <title>Global analysis of protein expression in yeast.</title>
        <authorList>
            <person name="Ghaemmaghami S."/>
            <person name="Huh W.-K."/>
            <person name="Bower K."/>
            <person name="Howson R.W."/>
            <person name="Belle A."/>
            <person name="Dephoure N."/>
            <person name="O'Shea E.K."/>
            <person name="Weissman J.S."/>
        </authorList>
    </citation>
    <scope>LEVEL OF PROTEIN EXPRESSION [LARGE SCALE ANALYSIS]</scope>
</reference>
<reference key="6">
    <citation type="journal article" date="2003" name="Proc. Natl. Acad. Sci. U.S.A.">
        <title>The proteome of Saccharomyces cerevisiae mitochondria.</title>
        <authorList>
            <person name="Sickmann A."/>
            <person name="Reinders J."/>
            <person name="Wagner Y."/>
            <person name="Joppich C."/>
            <person name="Zahedi R.P."/>
            <person name="Meyer H.E."/>
            <person name="Schoenfisch B."/>
            <person name="Perschil I."/>
            <person name="Chacinska A."/>
            <person name="Guiard B."/>
            <person name="Rehling P."/>
            <person name="Pfanner N."/>
            <person name="Meisinger C."/>
        </authorList>
    </citation>
    <scope>SUBCELLULAR LOCATION [LARGE SCALE ANALYSIS]</scope>
    <source>
        <strain>ATCC 76625 / YPH499</strain>
    </source>
</reference>
<reference key="7">
    <citation type="journal article" date="2007" name="Yeast">
        <title>The ORF YNL274c (GOR1) codes for glyoxylate reductase in Saccharomyces cerevisiae.</title>
        <authorList>
            <person name="Rintala E."/>
            <person name="Pitkanen J.P."/>
            <person name="Vehkomaki M.L."/>
            <person name="Penttila M."/>
            <person name="Ruohonen L."/>
        </authorList>
    </citation>
    <scope>FUNCTION</scope>
    <scope>DISRUPTION PHENOTYPE</scope>
</reference>
<reference key="8">
    <citation type="journal article" date="2008" name="Mol. Cell. Proteomics">
        <title>A multidimensional chromatography technology for in-depth phosphoproteome analysis.</title>
        <authorList>
            <person name="Albuquerque C.P."/>
            <person name="Smolka M.B."/>
            <person name="Payne S.H."/>
            <person name="Bafna V."/>
            <person name="Eng J."/>
            <person name="Zhou H."/>
        </authorList>
    </citation>
    <scope>PHOSPHORYLATION [LARGE SCALE ANALYSIS] AT THR-31</scope>
    <scope>IDENTIFICATION BY MASS SPECTROMETRY [LARGE SCALE ANALYSIS]</scope>
</reference>
<protein>
    <recommendedName>
        <fullName evidence="6">Glyoxylate reductase 1</fullName>
        <ecNumber evidence="5">1.1.1.26</ecNumber>
        <ecNumber evidence="5">1.1.1.79</ecNumber>
        <ecNumber evidence="5">1.1.1.81</ecNumber>
    </recommendedName>
</protein>
<name>GOR1_YEAST</name>
<gene>
    <name evidence="6" type="primary">GOR1</name>
    <name type="ordered locus">YNL274C</name>
    <name type="ORF">N0631</name>
</gene>
<proteinExistence type="evidence at protein level"/>
<comment type="function">
    <text evidence="5">Glyoxylate reductase that reversibly reduces glyoxylate to glycolate, or alternatively hydroxypyruvate to D-glycerate, using either NADPH or NADH as a cosubstrate (PubMed:17173333). Does not act as a hydroxyisocaproate dehydrogenase even though it also has minor activity on alpha-ketoisocaproate (PubMed:17173333).</text>
</comment>
<comment type="catalytic activity">
    <reaction evidence="5">
        <text>glycolate + NAD(+) = glyoxylate + NADH + H(+)</text>
        <dbReference type="Rhea" id="RHEA:18229"/>
        <dbReference type="ChEBI" id="CHEBI:15378"/>
        <dbReference type="ChEBI" id="CHEBI:29805"/>
        <dbReference type="ChEBI" id="CHEBI:36655"/>
        <dbReference type="ChEBI" id="CHEBI:57540"/>
        <dbReference type="ChEBI" id="CHEBI:57945"/>
        <dbReference type="EC" id="1.1.1.26"/>
    </reaction>
    <physiologicalReaction direction="right-to-left" evidence="5">
        <dbReference type="Rhea" id="RHEA:18231"/>
    </physiologicalReaction>
</comment>
<comment type="catalytic activity">
    <reaction evidence="5">
        <text>glycolate + NADP(+) = glyoxylate + NADPH + H(+)</text>
        <dbReference type="Rhea" id="RHEA:10992"/>
        <dbReference type="ChEBI" id="CHEBI:15378"/>
        <dbReference type="ChEBI" id="CHEBI:29805"/>
        <dbReference type="ChEBI" id="CHEBI:36655"/>
        <dbReference type="ChEBI" id="CHEBI:57783"/>
        <dbReference type="ChEBI" id="CHEBI:58349"/>
        <dbReference type="EC" id="1.1.1.79"/>
    </reaction>
    <physiologicalReaction direction="right-to-left" evidence="5">
        <dbReference type="Rhea" id="RHEA:10994"/>
    </physiologicalReaction>
</comment>
<comment type="catalytic activity">
    <reaction evidence="5">
        <text>(R)-glycerate + NAD(+) = 3-hydroxypyruvate + NADH + H(+)</text>
        <dbReference type="Rhea" id="RHEA:17905"/>
        <dbReference type="ChEBI" id="CHEBI:15378"/>
        <dbReference type="ChEBI" id="CHEBI:16659"/>
        <dbReference type="ChEBI" id="CHEBI:17180"/>
        <dbReference type="ChEBI" id="CHEBI:57540"/>
        <dbReference type="ChEBI" id="CHEBI:57945"/>
        <dbReference type="EC" id="1.1.1.81"/>
    </reaction>
    <physiologicalReaction direction="right-to-left" evidence="5">
        <dbReference type="Rhea" id="RHEA:17907"/>
    </physiologicalReaction>
</comment>
<comment type="catalytic activity">
    <reaction evidence="5">
        <text>(R)-glycerate + NADP(+) = 3-hydroxypyruvate + NADPH + H(+)</text>
        <dbReference type="Rhea" id="RHEA:18657"/>
        <dbReference type="ChEBI" id="CHEBI:15378"/>
        <dbReference type="ChEBI" id="CHEBI:16659"/>
        <dbReference type="ChEBI" id="CHEBI:17180"/>
        <dbReference type="ChEBI" id="CHEBI:57783"/>
        <dbReference type="ChEBI" id="CHEBI:58349"/>
        <dbReference type="EC" id="1.1.1.81"/>
    </reaction>
    <physiologicalReaction direction="right-to-left" evidence="5">
        <dbReference type="Rhea" id="RHEA:18659"/>
    </physiologicalReaction>
</comment>
<comment type="subcellular location">
    <subcellularLocation>
        <location evidence="2">Cytoplasm</location>
    </subcellularLocation>
    <subcellularLocation>
        <location evidence="2">Nucleus</location>
    </subcellularLocation>
    <subcellularLocation>
        <location evidence="4">Mitochondrion</location>
    </subcellularLocation>
</comment>
<comment type="disruption phenotype">
    <text evidence="5">Leads to higher biomass concentration after diauxic shift.</text>
</comment>
<comment type="miscellaneous">
    <text evidence="3">Present with 3280 molecules/cell in log phase SD medium.</text>
</comment>
<comment type="similarity">
    <text evidence="7">Belongs to the D-isomer specific 2-hydroxyacid dehydrogenase family.</text>
</comment>
<dbReference type="EC" id="1.1.1.26" evidence="5"/>
<dbReference type="EC" id="1.1.1.79" evidence="5"/>
<dbReference type="EC" id="1.1.1.81" evidence="5"/>
<dbReference type="EMBL" id="Z71550">
    <property type="protein sequence ID" value="CAA96182.1"/>
    <property type="molecule type" value="Genomic_DNA"/>
</dbReference>
<dbReference type="EMBL" id="AY692660">
    <property type="protein sequence ID" value="AAT92679.1"/>
    <property type="molecule type" value="Genomic_DNA"/>
</dbReference>
<dbReference type="EMBL" id="BK006947">
    <property type="protein sequence ID" value="DAA10286.1"/>
    <property type="molecule type" value="Genomic_DNA"/>
</dbReference>
<dbReference type="PIR" id="S63248">
    <property type="entry name" value="S63248"/>
</dbReference>
<dbReference type="RefSeq" id="NP_014125.1">
    <property type="nucleotide sequence ID" value="NM_001183112.1"/>
</dbReference>
<dbReference type="SMR" id="P53839"/>
<dbReference type="BioGRID" id="35566">
    <property type="interactions" value="27"/>
</dbReference>
<dbReference type="FunCoup" id="P53839">
    <property type="interactions" value="618"/>
</dbReference>
<dbReference type="IntAct" id="P53839">
    <property type="interactions" value="5"/>
</dbReference>
<dbReference type="MINT" id="P53839"/>
<dbReference type="STRING" id="4932.YNL274C"/>
<dbReference type="iPTMnet" id="P53839"/>
<dbReference type="PaxDb" id="4932-YNL274C"/>
<dbReference type="PeptideAtlas" id="P53839"/>
<dbReference type="EnsemblFungi" id="YNL274C_mRNA">
    <property type="protein sequence ID" value="YNL274C"/>
    <property type="gene ID" value="YNL274C"/>
</dbReference>
<dbReference type="GeneID" id="855447"/>
<dbReference type="KEGG" id="sce:YNL274C"/>
<dbReference type="AGR" id="SGD:S000005218"/>
<dbReference type="SGD" id="S000005218">
    <property type="gene designation" value="GOR1"/>
</dbReference>
<dbReference type="VEuPathDB" id="FungiDB:YNL274C"/>
<dbReference type="eggNOG" id="KOG0069">
    <property type="taxonomic scope" value="Eukaryota"/>
</dbReference>
<dbReference type="GeneTree" id="ENSGT00940000162740"/>
<dbReference type="HOGENOM" id="CLU_019796_1_2_1"/>
<dbReference type="InParanoid" id="P53839"/>
<dbReference type="OMA" id="PHIAWAY"/>
<dbReference type="OrthoDB" id="9991913at2759"/>
<dbReference type="BioCyc" id="MetaCyc:G3O-33268-MONOMER"/>
<dbReference type="BioCyc" id="YEAST:G3O-33268-MONOMER"/>
<dbReference type="BioGRID-ORCS" id="855447">
    <property type="hits" value="2 hits in 10 CRISPR screens"/>
</dbReference>
<dbReference type="PRO" id="PR:P53839"/>
<dbReference type="Proteomes" id="UP000002311">
    <property type="component" value="Chromosome XIV"/>
</dbReference>
<dbReference type="RNAct" id="P53839">
    <property type="molecule type" value="protein"/>
</dbReference>
<dbReference type="GO" id="GO:0005737">
    <property type="term" value="C:cytoplasm"/>
    <property type="evidence" value="ECO:0007005"/>
    <property type="project" value="SGD"/>
</dbReference>
<dbReference type="GO" id="GO:0005829">
    <property type="term" value="C:cytosol"/>
    <property type="evidence" value="ECO:0000318"/>
    <property type="project" value="GO_Central"/>
</dbReference>
<dbReference type="GO" id="GO:0005739">
    <property type="term" value="C:mitochondrion"/>
    <property type="evidence" value="ECO:0007005"/>
    <property type="project" value="SGD"/>
</dbReference>
<dbReference type="GO" id="GO:0005634">
    <property type="term" value="C:nucleus"/>
    <property type="evidence" value="ECO:0007005"/>
    <property type="project" value="SGD"/>
</dbReference>
<dbReference type="GO" id="GO:0047964">
    <property type="term" value="F:glyoxylate reductase (NADH) activity"/>
    <property type="evidence" value="ECO:0000315"/>
    <property type="project" value="SGD"/>
</dbReference>
<dbReference type="GO" id="GO:0030267">
    <property type="term" value="F:glyoxylate reductase (NADPH) activity"/>
    <property type="evidence" value="ECO:0000318"/>
    <property type="project" value="GO_Central"/>
</dbReference>
<dbReference type="GO" id="GO:0008465">
    <property type="term" value="F:hydroxypyruvate reductase (NADH) activity"/>
    <property type="evidence" value="ECO:0007669"/>
    <property type="project" value="RHEA"/>
</dbReference>
<dbReference type="GO" id="GO:0120509">
    <property type="term" value="F:hydroxypyruvate reductase (NADPH) activity"/>
    <property type="evidence" value="ECO:0007669"/>
    <property type="project" value="RHEA"/>
</dbReference>
<dbReference type="GO" id="GO:0016618">
    <property type="term" value="F:hydroxypyruvate reductase [NAD(P)H] activity"/>
    <property type="evidence" value="ECO:0000318"/>
    <property type="project" value="GO_Central"/>
</dbReference>
<dbReference type="GO" id="GO:0051287">
    <property type="term" value="F:NAD binding"/>
    <property type="evidence" value="ECO:0007669"/>
    <property type="project" value="InterPro"/>
</dbReference>
<dbReference type="GO" id="GO:0009436">
    <property type="term" value="P:glyoxylate catabolic process"/>
    <property type="evidence" value="ECO:0000315"/>
    <property type="project" value="SGD"/>
</dbReference>
<dbReference type="CDD" id="cd12168">
    <property type="entry name" value="Mand_dh_like"/>
    <property type="match status" value="1"/>
</dbReference>
<dbReference type="FunFam" id="3.40.50.720:FF:000026">
    <property type="entry name" value="Glyoxylate/hydroxypyruvate reductase B"/>
    <property type="match status" value="1"/>
</dbReference>
<dbReference type="Gene3D" id="3.40.50.720">
    <property type="entry name" value="NAD(P)-binding Rossmann-like Domain"/>
    <property type="match status" value="2"/>
</dbReference>
<dbReference type="InterPro" id="IPR050223">
    <property type="entry name" value="D-isomer_2-hydroxyacid_DH"/>
</dbReference>
<dbReference type="InterPro" id="IPR006139">
    <property type="entry name" value="D-isomer_2_OHA_DH_cat_dom"/>
</dbReference>
<dbReference type="InterPro" id="IPR029753">
    <property type="entry name" value="D-isomer_DH_CS"/>
</dbReference>
<dbReference type="InterPro" id="IPR029752">
    <property type="entry name" value="D-isomer_DH_CS1"/>
</dbReference>
<dbReference type="InterPro" id="IPR006140">
    <property type="entry name" value="D-isomer_DH_NAD-bd"/>
</dbReference>
<dbReference type="InterPro" id="IPR036291">
    <property type="entry name" value="NAD(P)-bd_dom_sf"/>
</dbReference>
<dbReference type="PANTHER" id="PTHR10996">
    <property type="entry name" value="2-HYDROXYACID DEHYDROGENASE-RELATED"/>
    <property type="match status" value="1"/>
</dbReference>
<dbReference type="PANTHER" id="PTHR10996:SF257">
    <property type="entry name" value="GLYOXYLATE REDUCTASE 1"/>
    <property type="match status" value="1"/>
</dbReference>
<dbReference type="Pfam" id="PF00389">
    <property type="entry name" value="2-Hacid_dh"/>
    <property type="match status" value="1"/>
</dbReference>
<dbReference type="Pfam" id="PF02826">
    <property type="entry name" value="2-Hacid_dh_C"/>
    <property type="match status" value="1"/>
</dbReference>
<dbReference type="SUPFAM" id="SSF52283">
    <property type="entry name" value="Formate/glycerate dehydrogenase catalytic domain-like"/>
    <property type="match status" value="1"/>
</dbReference>
<dbReference type="SUPFAM" id="SSF51735">
    <property type="entry name" value="NAD(P)-binding Rossmann-fold domains"/>
    <property type="match status" value="1"/>
</dbReference>
<dbReference type="PROSITE" id="PS00065">
    <property type="entry name" value="D_2_HYDROXYACID_DH_1"/>
    <property type="match status" value="1"/>
</dbReference>
<dbReference type="PROSITE" id="PS00670">
    <property type="entry name" value="D_2_HYDROXYACID_DH_2"/>
    <property type="match status" value="1"/>
</dbReference>
<dbReference type="PROSITE" id="PS00671">
    <property type="entry name" value="D_2_HYDROXYACID_DH_3"/>
    <property type="match status" value="1"/>
</dbReference>
<sequence>MSKKPIVLKLGKDAFGDQAWGELEKIADVITIPESTTREQFLREVKDPQNKLSQVQVITRTARSVKNTGRFDEELALALPSSVVAVCHTGAGYDQIDVEPFKKRHIQVANVPDLVSNATADTHVFLLLGALRNFGIGNRRLIEGNWPEAGPACGSPFGYDPEGKTVGILGLGRIGRCILERLKPFGFENFIYHNRHQLPSEEEHGCEYVGFEEFLKRSDIVSVNVPLNHNTHHLINAETIEKMKDGVVIVNTARGAVIDEQAMTDALRSGKIRSAGLDVFEYEPKISKELLSMSQVLGLPHMGTHSVETRKKMEELVVENAKNVILTGKVLTIVPELQNEDWPNESKPLV</sequence>
<evidence type="ECO:0000250" key="1">
    <source>
        <dbReference type="UniProtKB" id="Q9I3W9"/>
    </source>
</evidence>
<evidence type="ECO:0000269" key="2">
    <source>
    </source>
</evidence>
<evidence type="ECO:0000269" key="3">
    <source>
    </source>
</evidence>
<evidence type="ECO:0000269" key="4">
    <source>
    </source>
</evidence>
<evidence type="ECO:0000269" key="5">
    <source>
    </source>
</evidence>
<evidence type="ECO:0000303" key="6">
    <source>
    </source>
</evidence>
<evidence type="ECO:0000305" key="7"/>
<evidence type="ECO:0007744" key="8">
    <source>
    </source>
</evidence>
<feature type="chain" id="PRO_0000076040" description="Glyoxylate reductase 1">
    <location>
        <begin position="1"/>
        <end position="350"/>
    </location>
</feature>
<feature type="active site" evidence="1">
    <location>
        <position position="254"/>
    </location>
</feature>
<feature type="active site" evidence="1">
    <location>
        <position position="283"/>
    </location>
</feature>
<feature type="active site" description="Proton donor" evidence="1">
    <location>
        <position position="301"/>
    </location>
</feature>
<feature type="binding site" evidence="1">
    <location>
        <begin position="173"/>
        <end position="174"/>
    </location>
    <ligand>
        <name>NAD(+)</name>
        <dbReference type="ChEBI" id="CHEBI:57540"/>
    </ligand>
</feature>
<feature type="binding site" evidence="1">
    <location>
        <begin position="252"/>
        <end position="254"/>
    </location>
    <ligand>
        <name>NAD(+)</name>
        <dbReference type="ChEBI" id="CHEBI:57540"/>
    </ligand>
</feature>
<feature type="binding site" evidence="1">
    <location>
        <position position="278"/>
    </location>
    <ligand>
        <name>NAD(+)</name>
        <dbReference type="ChEBI" id="CHEBI:57540"/>
    </ligand>
</feature>
<feature type="binding site" evidence="1">
    <location>
        <begin position="301"/>
        <end position="304"/>
    </location>
    <ligand>
        <name>NAD(+)</name>
        <dbReference type="ChEBI" id="CHEBI:57540"/>
    </ligand>
</feature>
<feature type="modified residue" description="Phosphothreonine" evidence="8">
    <location>
        <position position="31"/>
    </location>
</feature>